<comment type="catalytic activity">
    <reaction evidence="1">
        <text>tRNA(Leu) + L-leucine + ATP = L-leucyl-tRNA(Leu) + AMP + diphosphate</text>
        <dbReference type="Rhea" id="RHEA:11688"/>
        <dbReference type="Rhea" id="RHEA-COMP:9613"/>
        <dbReference type="Rhea" id="RHEA-COMP:9622"/>
        <dbReference type="ChEBI" id="CHEBI:30616"/>
        <dbReference type="ChEBI" id="CHEBI:33019"/>
        <dbReference type="ChEBI" id="CHEBI:57427"/>
        <dbReference type="ChEBI" id="CHEBI:78442"/>
        <dbReference type="ChEBI" id="CHEBI:78494"/>
        <dbReference type="ChEBI" id="CHEBI:456215"/>
        <dbReference type="EC" id="6.1.1.4"/>
    </reaction>
</comment>
<comment type="subcellular location">
    <subcellularLocation>
        <location evidence="1">Cytoplasm</location>
    </subcellularLocation>
</comment>
<comment type="similarity">
    <text evidence="1">Belongs to the class-I aminoacyl-tRNA synthetase family.</text>
</comment>
<sequence>MDAQYTPHAIESAAQTFWDKNQCFKAVEDATREKFYCLSMFPYPSGKLHMGHVRNYTIGDVVSRFQRMQGKNVLQPMGWDAFGMPAENAAIKNRVPPGAWTYDNIDAMRRQLKALGFAYDWNREFATCDVDYYRWEQWFFTKLVEKGLVYKKMSTVNWDPVDQTVLANEQVIEGRGWRSGALVERKEIPLWFLKITDYADELLADLDKVDWPEQVKTMQRNWIGKSTGVELSFAVADSSEQLEVYTTRPDTLYGVTYVAVAAGHPLARQAAQDNPALGDFLEECQQGGNSEAELATMEKKGMDTGHKAIHPLTGREVPIFVANFVLMEYGTGAVMAVPAHDQRDWEFATKYGIPIEPVIADAEGNTPDLSQGAHTEHGKLINSGEFDGLEFDAAFDAIAARLEANGQGTVKTNFRLRDWGVARQRYWGAPIPVKYGPEGQTVPLTDDELPVALPMEVEVDASGSPLKKMPAFYDLGEGWTRETDTFDTFMESSWYYARFASADNMEAMLDERADYWLPVDLYIGGIEHAILHLLYARFFHKLMRDFGLVASDEPFQRLLTQGMVIAETFYRANDDGSKDWFNPADVDVQRDDKGRPVSAILREDGQPVEMGGIEKMSKSKNNGVDPQAMIDRFGADTVRLFMMFAAPPEQSLEWSDSGVEGAHRFLKRLWKLVADHLDAGTPAALDADALNDDQKTLRRKTHETIAKASDDIGRRTTFNTAIAAVMELVNAIGRFEDTSPQGLAVTREALEACVLVLAPIVPHACHALWDALGHDTPVIDAAWPQADEAAMVKDSVELAVQVNGKLRARLDVPAAADKAAIEAQALEAENVRRHTEGKTIRKVIVVPGKLVNIVAN</sequence>
<name>SYL_CHRSD</name>
<gene>
    <name evidence="1" type="primary">leuS</name>
    <name type="ordered locus">Csal_2344</name>
</gene>
<organism>
    <name type="scientific">Chromohalobacter salexigens (strain ATCC BAA-138 / DSM 3043 / CIP 106854 / NCIMB 13768 / 1H11)</name>
    <dbReference type="NCBI Taxonomy" id="290398"/>
    <lineage>
        <taxon>Bacteria</taxon>
        <taxon>Pseudomonadati</taxon>
        <taxon>Pseudomonadota</taxon>
        <taxon>Gammaproteobacteria</taxon>
        <taxon>Oceanospirillales</taxon>
        <taxon>Halomonadaceae</taxon>
        <taxon>Chromohalobacter</taxon>
    </lineage>
</organism>
<keyword id="KW-0030">Aminoacyl-tRNA synthetase</keyword>
<keyword id="KW-0067">ATP-binding</keyword>
<keyword id="KW-0963">Cytoplasm</keyword>
<keyword id="KW-0436">Ligase</keyword>
<keyword id="KW-0547">Nucleotide-binding</keyword>
<keyword id="KW-0648">Protein biosynthesis</keyword>
<keyword id="KW-1185">Reference proteome</keyword>
<evidence type="ECO:0000255" key="1">
    <source>
        <dbReference type="HAMAP-Rule" id="MF_00049"/>
    </source>
</evidence>
<protein>
    <recommendedName>
        <fullName evidence="1">Leucine--tRNA ligase</fullName>
        <ecNumber evidence="1">6.1.1.4</ecNumber>
    </recommendedName>
    <alternativeName>
        <fullName evidence="1">Leucyl-tRNA synthetase</fullName>
        <shortName evidence="1">LeuRS</shortName>
    </alternativeName>
</protein>
<dbReference type="EC" id="6.1.1.4" evidence="1"/>
<dbReference type="EMBL" id="CP000285">
    <property type="protein sequence ID" value="ABE59693.1"/>
    <property type="molecule type" value="Genomic_DNA"/>
</dbReference>
<dbReference type="RefSeq" id="WP_011507639.1">
    <property type="nucleotide sequence ID" value="NC_007963.1"/>
</dbReference>
<dbReference type="SMR" id="Q1QV15"/>
<dbReference type="STRING" id="290398.Csal_2344"/>
<dbReference type="GeneID" id="95335054"/>
<dbReference type="KEGG" id="csa:Csal_2344"/>
<dbReference type="eggNOG" id="COG0495">
    <property type="taxonomic scope" value="Bacteria"/>
</dbReference>
<dbReference type="HOGENOM" id="CLU_004427_0_0_6"/>
<dbReference type="OrthoDB" id="9810365at2"/>
<dbReference type="Proteomes" id="UP000000239">
    <property type="component" value="Chromosome"/>
</dbReference>
<dbReference type="GO" id="GO:0005829">
    <property type="term" value="C:cytosol"/>
    <property type="evidence" value="ECO:0007669"/>
    <property type="project" value="TreeGrafter"/>
</dbReference>
<dbReference type="GO" id="GO:0002161">
    <property type="term" value="F:aminoacyl-tRNA deacylase activity"/>
    <property type="evidence" value="ECO:0007669"/>
    <property type="project" value="InterPro"/>
</dbReference>
<dbReference type="GO" id="GO:0005524">
    <property type="term" value="F:ATP binding"/>
    <property type="evidence" value="ECO:0007669"/>
    <property type="project" value="UniProtKB-UniRule"/>
</dbReference>
<dbReference type="GO" id="GO:0004823">
    <property type="term" value="F:leucine-tRNA ligase activity"/>
    <property type="evidence" value="ECO:0007669"/>
    <property type="project" value="UniProtKB-UniRule"/>
</dbReference>
<dbReference type="GO" id="GO:0006429">
    <property type="term" value="P:leucyl-tRNA aminoacylation"/>
    <property type="evidence" value="ECO:0007669"/>
    <property type="project" value="UniProtKB-UniRule"/>
</dbReference>
<dbReference type="CDD" id="cd07958">
    <property type="entry name" value="Anticodon_Ia_Leu_BEm"/>
    <property type="match status" value="1"/>
</dbReference>
<dbReference type="CDD" id="cd00812">
    <property type="entry name" value="LeuRS_core"/>
    <property type="match status" value="1"/>
</dbReference>
<dbReference type="FunFam" id="1.10.730.10:FF:000003">
    <property type="entry name" value="Leucine--tRNA ligase"/>
    <property type="match status" value="1"/>
</dbReference>
<dbReference type="FunFam" id="2.20.28.290:FF:000001">
    <property type="entry name" value="Leucine--tRNA ligase"/>
    <property type="match status" value="1"/>
</dbReference>
<dbReference type="FunFam" id="3.10.20.590:FF:000001">
    <property type="entry name" value="Leucine--tRNA ligase"/>
    <property type="match status" value="1"/>
</dbReference>
<dbReference type="FunFam" id="3.40.50.620:FF:000003">
    <property type="entry name" value="Leucine--tRNA ligase"/>
    <property type="match status" value="1"/>
</dbReference>
<dbReference type="Gene3D" id="2.20.28.290">
    <property type="match status" value="1"/>
</dbReference>
<dbReference type="Gene3D" id="3.10.20.590">
    <property type="match status" value="1"/>
</dbReference>
<dbReference type="Gene3D" id="3.40.50.620">
    <property type="entry name" value="HUPs"/>
    <property type="match status" value="2"/>
</dbReference>
<dbReference type="Gene3D" id="1.10.730.10">
    <property type="entry name" value="Isoleucyl-tRNA Synthetase, Domain 1"/>
    <property type="match status" value="1"/>
</dbReference>
<dbReference type="HAMAP" id="MF_00049_B">
    <property type="entry name" value="Leu_tRNA_synth_B"/>
    <property type="match status" value="1"/>
</dbReference>
<dbReference type="InterPro" id="IPR001412">
    <property type="entry name" value="aa-tRNA-synth_I_CS"/>
</dbReference>
<dbReference type="InterPro" id="IPR002300">
    <property type="entry name" value="aa-tRNA-synth_Ia"/>
</dbReference>
<dbReference type="InterPro" id="IPR002302">
    <property type="entry name" value="Leu-tRNA-ligase"/>
</dbReference>
<dbReference type="InterPro" id="IPR025709">
    <property type="entry name" value="Leu_tRNA-synth_edit"/>
</dbReference>
<dbReference type="InterPro" id="IPR013155">
    <property type="entry name" value="M/V/L/I-tRNA-synth_anticd-bd"/>
</dbReference>
<dbReference type="InterPro" id="IPR015413">
    <property type="entry name" value="Methionyl/Leucyl_tRNA_Synth"/>
</dbReference>
<dbReference type="InterPro" id="IPR014729">
    <property type="entry name" value="Rossmann-like_a/b/a_fold"/>
</dbReference>
<dbReference type="InterPro" id="IPR009080">
    <property type="entry name" value="tRNAsynth_Ia_anticodon-bd"/>
</dbReference>
<dbReference type="InterPro" id="IPR009008">
    <property type="entry name" value="Val/Leu/Ile-tRNA-synth_edit"/>
</dbReference>
<dbReference type="NCBIfam" id="TIGR00396">
    <property type="entry name" value="leuS_bact"/>
    <property type="match status" value="1"/>
</dbReference>
<dbReference type="PANTHER" id="PTHR43740:SF2">
    <property type="entry name" value="LEUCINE--TRNA LIGASE, MITOCHONDRIAL"/>
    <property type="match status" value="1"/>
</dbReference>
<dbReference type="PANTHER" id="PTHR43740">
    <property type="entry name" value="LEUCYL-TRNA SYNTHETASE"/>
    <property type="match status" value="1"/>
</dbReference>
<dbReference type="Pfam" id="PF08264">
    <property type="entry name" value="Anticodon_1"/>
    <property type="match status" value="1"/>
</dbReference>
<dbReference type="Pfam" id="PF00133">
    <property type="entry name" value="tRNA-synt_1"/>
    <property type="match status" value="2"/>
</dbReference>
<dbReference type="Pfam" id="PF13603">
    <property type="entry name" value="tRNA-synt_1_2"/>
    <property type="match status" value="1"/>
</dbReference>
<dbReference type="Pfam" id="PF09334">
    <property type="entry name" value="tRNA-synt_1g"/>
    <property type="match status" value="1"/>
</dbReference>
<dbReference type="PRINTS" id="PR00985">
    <property type="entry name" value="TRNASYNTHLEU"/>
</dbReference>
<dbReference type="SUPFAM" id="SSF47323">
    <property type="entry name" value="Anticodon-binding domain of a subclass of class I aminoacyl-tRNA synthetases"/>
    <property type="match status" value="1"/>
</dbReference>
<dbReference type="SUPFAM" id="SSF52374">
    <property type="entry name" value="Nucleotidylyl transferase"/>
    <property type="match status" value="1"/>
</dbReference>
<dbReference type="SUPFAM" id="SSF50677">
    <property type="entry name" value="ValRS/IleRS/LeuRS editing domain"/>
    <property type="match status" value="1"/>
</dbReference>
<dbReference type="PROSITE" id="PS00178">
    <property type="entry name" value="AA_TRNA_LIGASE_I"/>
    <property type="match status" value="1"/>
</dbReference>
<accession>Q1QV15</accession>
<proteinExistence type="inferred from homology"/>
<reference key="1">
    <citation type="journal article" date="2011" name="Stand. Genomic Sci.">
        <title>Complete genome sequence of the halophilic and highly halotolerant Chromohalobacter salexigens type strain (1H11(T)).</title>
        <authorList>
            <person name="Copeland A."/>
            <person name="O'Connor K."/>
            <person name="Lucas S."/>
            <person name="Lapidus A."/>
            <person name="Berry K.W."/>
            <person name="Detter J.C."/>
            <person name="Del Rio T.G."/>
            <person name="Hammon N."/>
            <person name="Dalin E."/>
            <person name="Tice H."/>
            <person name="Pitluck S."/>
            <person name="Bruce D."/>
            <person name="Goodwin L."/>
            <person name="Han C."/>
            <person name="Tapia R."/>
            <person name="Saunders E."/>
            <person name="Schmutz J."/>
            <person name="Brettin T."/>
            <person name="Larimer F."/>
            <person name="Land M."/>
            <person name="Hauser L."/>
            <person name="Vargas C."/>
            <person name="Nieto J.J."/>
            <person name="Kyrpides N.C."/>
            <person name="Ivanova N."/>
            <person name="Goker M."/>
            <person name="Klenk H.P."/>
            <person name="Csonka L.N."/>
            <person name="Woyke T."/>
        </authorList>
    </citation>
    <scope>NUCLEOTIDE SEQUENCE [LARGE SCALE GENOMIC DNA]</scope>
    <source>
        <strain>ATCC BAA-138 / DSM 3043 / CIP 106854 / NCIMB 13768 / 1H11</strain>
    </source>
</reference>
<feature type="chain" id="PRO_1000009324" description="Leucine--tRNA ligase">
    <location>
        <begin position="1"/>
        <end position="856"/>
    </location>
</feature>
<feature type="short sequence motif" description="'HIGH' region">
    <location>
        <begin position="42"/>
        <end position="52"/>
    </location>
</feature>
<feature type="short sequence motif" description="'KMSKS' region">
    <location>
        <begin position="615"/>
        <end position="619"/>
    </location>
</feature>
<feature type="binding site" evidence="1">
    <location>
        <position position="618"/>
    </location>
    <ligand>
        <name>ATP</name>
        <dbReference type="ChEBI" id="CHEBI:30616"/>
    </ligand>
</feature>